<sequence length="323" mass="36720">MDPKSQRVKLNDGHFIPVLGFGTYAPEEVPKSEALEATKFAIEVGFRHVDSAHLYQNEEQVGQAIRSKIADGTVKREDIFYTSKLWCNSLQPELVRPALEKSLQNLQLDYVDLYIIHSPVSLKPGNKFVPKDESGKLIFDSVDLCHTWEALEKCKDAGLTKSIGVSNFNHKQLEKILNKPGLKYKPVCNQVECHPYLNQSKLLEFCKSHDIVLVAYAALGAQLLSEWVNSNNPVLLEDPVLCAIAKKHKQTPALVALRYQVQRGVVVLAKSFNKKRIKENMQVFDFELTPEDMKAIDGLNRNIRYYDFQKGIGHPEYPFSEEY</sequence>
<organism>
    <name type="scientific">Bos taurus</name>
    <name type="common">Bovine</name>
    <dbReference type="NCBI Taxonomy" id="9913"/>
    <lineage>
        <taxon>Eukaryota</taxon>
        <taxon>Metazoa</taxon>
        <taxon>Chordata</taxon>
        <taxon>Craniata</taxon>
        <taxon>Vertebrata</taxon>
        <taxon>Euteleostomi</taxon>
        <taxon>Mammalia</taxon>
        <taxon>Eutheria</taxon>
        <taxon>Laurasiatheria</taxon>
        <taxon>Artiodactyla</taxon>
        <taxon>Ruminantia</taxon>
        <taxon>Pecora</taxon>
        <taxon>Bovidae</taxon>
        <taxon>Bovinae</taxon>
        <taxon>Bos</taxon>
    </lineage>
</organism>
<proteinExistence type="evidence at protein level"/>
<evidence type="ECO:0000250" key="1"/>
<evidence type="ECO:0000305" key="2"/>
<protein>
    <recommendedName>
        <fullName>Prostaglandin F synthase 1</fullName>
        <shortName>PGF 1</shortName>
        <shortName>PGF synthase 1</shortName>
        <shortName>PGFS1</shortName>
        <ecNumber>1.1.1.188</ecNumber>
    </recommendedName>
    <alternativeName>
        <fullName>Prostaglandin F synthase I</fullName>
        <shortName>PGFSI</shortName>
    </alternativeName>
    <alternativeName>
        <fullName>Prostaglandin-D2 11 reductase 1</fullName>
    </alternativeName>
</protein>
<feature type="chain" id="PRO_0000124646" description="Prostaglandin F synthase 1">
    <location>
        <begin position="1"/>
        <end position="323"/>
    </location>
</feature>
<feature type="active site" description="Proton donor" evidence="1">
    <location>
        <position position="55"/>
    </location>
</feature>
<feature type="binding site" evidence="1">
    <location>
        <begin position="20"/>
        <end position="24"/>
    </location>
    <ligand>
        <name>NADP(+)</name>
        <dbReference type="ChEBI" id="CHEBI:58349"/>
    </ligand>
</feature>
<feature type="binding site" evidence="1">
    <location>
        <position position="50"/>
    </location>
    <ligand>
        <name>NADP(+)</name>
        <dbReference type="ChEBI" id="CHEBI:58349"/>
    </ligand>
</feature>
<feature type="binding site" evidence="1">
    <location>
        <position position="117"/>
    </location>
    <ligand>
        <name>substrate</name>
    </ligand>
</feature>
<feature type="binding site" evidence="1">
    <location>
        <begin position="166"/>
        <end position="167"/>
    </location>
    <ligand>
        <name>NADP(+)</name>
        <dbReference type="ChEBI" id="CHEBI:58349"/>
    </ligand>
</feature>
<feature type="binding site" evidence="1">
    <location>
        <position position="190"/>
    </location>
    <ligand>
        <name>NADP(+)</name>
        <dbReference type="ChEBI" id="CHEBI:58349"/>
    </ligand>
</feature>
<feature type="binding site" evidence="1">
    <location>
        <begin position="216"/>
        <end position="221"/>
    </location>
    <ligand>
        <name>NADP(+)</name>
        <dbReference type="ChEBI" id="CHEBI:58349"/>
    </ligand>
</feature>
<feature type="binding site" evidence="1">
    <location>
        <begin position="270"/>
        <end position="280"/>
    </location>
    <ligand>
        <name>NADP(+)</name>
        <dbReference type="ChEBI" id="CHEBI:58349"/>
    </ligand>
</feature>
<feature type="site" description="Lowers pKa of active site Tyr" evidence="1">
    <location>
        <position position="84"/>
    </location>
</feature>
<accession>P05980</accession>
<dbReference type="EC" id="1.1.1.188"/>
<dbReference type="EMBL" id="J03570">
    <property type="protein sequence ID" value="AAA30694.1"/>
    <property type="molecule type" value="mRNA"/>
</dbReference>
<dbReference type="PIR" id="A28396">
    <property type="entry name" value="A28396"/>
</dbReference>
<dbReference type="RefSeq" id="NP_001159696.1">
    <property type="nucleotide sequence ID" value="NM_001166224.1"/>
</dbReference>
<dbReference type="SMR" id="P05980"/>
<dbReference type="FunCoup" id="P05980">
    <property type="interactions" value="104"/>
</dbReference>
<dbReference type="PeptideAtlas" id="P05980"/>
<dbReference type="GeneID" id="782922"/>
<dbReference type="KEGG" id="bta:782922"/>
<dbReference type="InParanoid" id="P05980"/>
<dbReference type="OrthoDB" id="416253at2759"/>
<dbReference type="SABIO-RK" id="P05980"/>
<dbReference type="UniPathway" id="UPA00662"/>
<dbReference type="Proteomes" id="UP000009136">
    <property type="component" value="Unplaced"/>
</dbReference>
<dbReference type="GO" id="GO:0005829">
    <property type="term" value="C:cytosol"/>
    <property type="evidence" value="ECO:0000318"/>
    <property type="project" value="GO_Central"/>
</dbReference>
<dbReference type="GO" id="GO:0004032">
    <property type="term" value="F:aldose reductase (NADPH) activity"/>
    <property type="evidence" value="ECO:0000318"/>
    <property type="project" value="GO_Central"/>
</dbReference>
<dbReference type="GO" id="GO:0047086">
    <property type="term" value="F:ketosteroid monooxygenase activity"/>
    <property type="evidence" value="ECO:0000318"/>
    <property type="project" value="GO_Central"/>
</dbReference>
<dbReference type="GO" id="GO:0047017">
    <property type="term" value="F:prostaglandin F synthase activity"/>
    <property type="evidence" value="ECO:0007669"/>
    <property type="project" value="UniProtKB-EC"/>
</dbReference>
<dbReference type="GO" id="GO:0016229">
    <property type="term" value="F:steroid dehydrogenase activity"/>
    <property type="evidence" value="ECO:0000318"/>
    <property type="project" value="GO_Central"/>
</dbReference>
<dbReference type="GO" id="GO:0001516">
    <property type="term" value="P:prostaglandin biosynthetic process"/>
    <property type="evidence" value="ECO:0007669"/>
    <property type="project" value="UniProtKB-UniPathway"/>
</dbReference>
<dbReference type="GO" id="GO:0008202">
    <property type="term" value="P:steroid metabolic process"/>
    <property type="evidence" value="ECO:0000318"/>
    <property type="project" value="GO_Central"/>
</dbReference>
<dbReference type="CDD" id="cd19108">
    <property type="entry name" value="AKR_AKR1C1-35"/>
    <property type="match status" value="1"/>
</dbReference>
<dbReference type="FunFam" id="3.20.20.100:FF:000003">
    <property type="entry name" value="Aldo-keto reductase family 1 member C3"/>
    <property type="match status" value="1"/>
</dbReference>
<dbReference type="Gene3D" id="3.20.20.100">
    <property type="entry name" value="NADP-dependent oxidoreductase domain"/>
    <property type="match status" value="1"/>
</dbReference>
<dbReference type="InterPro" id="IPR020471">
    <property type="entry name" value="AKR"/>
</dbReference>
<dbReference type="InterPro" id="IPR044482">
    <property type="entry name" value="AKR1C"/>
</dbReference>
<dbReference type="InterPro" id="IPR018170">
    <property type="entry name" value="Aldo/ket_reductase_CS"/>
</dbReference>
<dbReference type="InterPro" id="IPR023210">
    <property type="entry name" value="NADP_OxRdtase_dom"/>
</dbReference>
<dbReference type="InterPro" id="IPR036812">
    <property type="entry name" value="NADP_OxRdtase_dom_sf"/>
</dbReference>
<dbReference type="PANTHER" id="PTHR11732">
    <property type="entry name" value="ALDO/KETO REDUCTASE"/>
    <property type="match status" value="1"/>
</dbReference>
<dbReference type="Pfam" id="PF00248">
    <property type="entry name" value="Aldo_ket_red"/>
    <property type="match status" value="1"/>
</dbReference>
<dbReference type="PIRSF" id="PIRSF000097">
    <property type="entry name" value="AKR"/>
    <property type="match status" value="1"/>
</dbReference>
<dbReference type="PRINTS" id="PR00069">
    <property type="entry name" value="ALDKETRDTASE"/>
</dbReference>
<dbReference type="SUPFAM" id="SSF51430">
    <property type="entry name" value="NAD(P)-linked oxidoreductase"/>
    <property type="match status" value="1"/>
</dbReference>
<dbReference type="PROSITE" id="PS00798">
    <property type="entry name" value="ALDOKETO_REDUCTASE_1"/>
    <property type="match status" value="1"/>
</dbReference>
<dbReference type="PROSITE" id="PS00062">
    <property type="entry name" value="ALDOKETO_REDUCTASE_2"/>
    <property type="match status" value="1"/>
</dbReference>
<dbReference type="PROSITE" id="PS00063">
    <property type="entry name" value="ALDOKETO_REDUCTASE_3"/>
    <property type="match status" value="1"/>
</dbReference>
<keyword id="KW-0963">Cytoplasm</keyword>
<keyword id="KW-0903">Direct protein sequencing</keyword>
<keyword id="KW-0275">Fatty acid biosynthesis</keyword>
<keyword id="KW-0276">Fatty acid metabolism</keyword>
<keyword id="KW-0444">Lipid biosynthesis</keyword>
<keyword id="KW-0443">Lipid metabolism</keyword>
<keyword id="KW-0521">NADP</keyword>
<keyword id="KW-0560">Oxidoreductase</keyword>
<keyword id="KW-0643">Prostaglandin biosynthesis</keyword>
<keyword id="KW-0644">Prostaglandin metabolism</keyword>
<keyword id="KW-1185">Reference proteome</keyword>
<reference key="1">
    <citation type="journal article" date="1988" name="Proc. Natl. Acad. Sci. U.S.A.">
        <title>Structural similarity of bovine lung prostaglandin F synthase to lens epsilon-crystallin of the European common frog.</title>
        <authorList>
            <person name="Watanabe K."/>
            <person name="Fujii Y."/>
            <person name="Nakayama K."/>
            <person name="Ohkubo H."/>
            <person name="Kuramitsu S."/>
            <person name="Kagamiyama H."/>
            <person name="Nakanishi S."/>
            <person name="Hayaishi O."/>
        </authorList>
    </citation>
    <scope>NUCLEOTIDE SEQUENCE [MRNA]</scope>
    <scope>PARTIAL PROTEIN SEQUENCE</scope>
    <source>
        <tissue>Lung</tissue>
    </source>
</reference>
<name>PGFS1_BOVIN</name>
<comment type="function">
    <text>Catalyzes the reduction of PGD(2) and PGH(2) to PGF(2 alpha) and a stereoisomer, respectively. It has a broad substrate specificity and also reduces other carbonyl compounds.</text>
</comment>
<comment type="catalytic activity">
    <reaction>
        <text>prostaglandin F2alpha + NADP(+) = prostaglandin D2 + NADPH + H(+)</text>
        <dbReference type="Rhea" id="RHEA:10140"/>
        <dbReference type="ChEBI" id="CHEBI:15378"/>
        <dbReference type="ChEBI" id="CHEBI:57404"/>
        <dbReference type="ChEBI" id="CHEBI:57406"/>
        <dbReference type="ChEBI" id="CHEBI:57783"/>
        <dbReference type="ChEBI" id="CHEBI:58349"/>
        <dbReference type="EC" id="1.1.1.188"/>
    </reaction>
</comment>
<comment type="pathway">
    <text>Lipid metabolism; prostaglandin biosynthesis.</text>
</comment>
<comment type="subunit">
    <text>Monomer.</text>
</comment>
<comment type="subcellular location">
    <subcellularLocation>
        <location>Cytoplasm</location>
    </subcellularLocation>
</comment>
<comment type="PTM">
    <text>The N-terminus is blocked.</text>
</comment>
<comment type="similarity">
    <text evidence="2">Belongs to the aldo/keto reductase family.</text>
</comment>